<protein>
    <recommendedName>
        <fullName evidence="7">Autophagy-related protein 27</fullName>
    </recommendedName>
</protein>
<feature type="signal peptide" evidence="2">
    <location>
        <begin position="1"/>
        <end position="20"/>
    </location>
</feature>
<feature type="chain" id="PRO_5010124089" description="Autophagy-related protein 27">
    <location>
        <begin position="21"/>
        <end position="348"/>
    </location>
</feature>
<feature type="topological domain" description="Lumenal" evidence="1">
    <location>
        <begin position="21"/>
        <end position="274"/>
    </location>
</feature>
<feature type="transmembrane region" description="Helical" evidence="2">
    <location>
        <begin position="275"/>
        <end position="295"/>
    </location>
</feature>
<feature type="topological domain" description="Cytoplasmic" evidence="1">
    <location>
        <begin position="296"/>
        <end position="348"/>
    </location>
</feature>
<feature type="domain" description="MRH" evidence="4">
    <location>
        <begin position="24"/>
        <end position="255"/>
    </location>
</feature>
<feature type="region of interest" description="Disordered" evidence="5">
    <location>
        <begin position="180"/>
        <end position="219"/>
    </location>
</feature>
<feature type="compositionally biased region" description="Basic and acidic residues" evidence="5">
    <location>
        <begin position="180"/>
        <end position="208"/>
    </location>
</feature>
<feature type="glycosylation site" description="N-linked (GlcNAc...) asparagine" evidence="3">
    <location>
        <position position="61"/>
    </location>
</feature>
<feature type="glycosylation site" description="N-linked (GlcNAc...) asparagine" evidence="3">
    <location>
        <position position="84"/>
    </location>
</feature>
<feature type="glycosylation site" description="N-linked (GlcNAc...) asparagine" evidence="3">
    <location>
        <position position="226"/>
    </location>
</feature>
<feature type="glycosylation site" description="N-linked (GlcNAc...) asparagine" evidence="3">
    <location>
        <position position="270"/>
    </location>
</feature>
<feature type="disulfide bond" evidence="4">
    <location>
        <begin position="26"/>
        <end position="69"/>
    </location>
</feature>
<feature type="disulfide bond" evidence="4">
    <location>
        <begin position="82"/>
        <end position="89"/>
    </location>
</feature>
<feature type="disulfide bond" evidence="4">
    <location>
        <begin position="175"/>
        <end position="253"/>
    </location>
</feature>
<reference key="1">
    <citation type="journal article" date="2007" name="Science">
        <title>The Fusarium graminearum genome reveals a link between localized polymorphism and pathogen specialization.</title>
        <authorList>
            <person name="Cuomo C.A."/>
            <person name="Gueldener U."/>
            <person name="Xu J.-R."/>
            <person name="Trail F."/>
            <person name="Turgeon B.G."/>
            <person name="Di Pietro A."/>
            <person name="Walton J.D."/>
            <person name="Ma L.-J."/>
            <person name="Baker S.E."/>
            <person name="Rep M."/>
            <person name="Adam G."/>
            <person name="Antoniw J."/>
            <person name="Baldwin T."/>
            <person name="Calvo S.E."/>
            <person name="Chang Y.-L."/>
            <person name="DeCaprio D."/>
            <person name="Gale L.R."/>
            <person name="Gnerre S."/>
            <person name="Goswami R.S."/>
            <person name="Hammond-Kosack K."/>
            <person name="Harris L.J."/>
            <person name="Hilburn K."/>
            <person name="Kennell J.C."/>
            <person name="Kroken S."/>
            <person name="Magnuson J.K."/>
            <person name="Mannhaupt G."/>
            <person name="Mauceli E.W."/>
            <person name="Mewes H.-W."/>
            <person name="Mitterbauer R."/>
            <person name="Muehlbauer G."/>
            <person name="Muensterkoetter M."/>
            <person name="Nelson D."/>
            <person name="O'Donnell K."/>
            <person name="Ouellet T."/>
            <person name="Qi W."/>
            <person name="Quesneville H."/>
            <person name="Roncero M.I.G."/>
            <person name="Seong K.-Y."/>
            <person name="Tetko I.V."/>
            <person name="Urban M."/>
            <person name="Waalwijk C."/>
            <person name="Ward T.J."/>
            <person name="Yao J."/>
            <person name="Birren B.W."/>
            <person name="Kistler H.C."/>
        </authorList>
    </citation>
    <scope>NUCLEOTIDE SEQUENCE [LARGE SCALE GENOMIC DNA]</scope>
    <source>
        <strain>ATCC MYA-4620 / CBS 123657 / FGSC 9075 / NRRL 31084 / PH-1</strain>
    </source>
</reference>
<reference key="2">
    <citation type="journal article" date="2010" name="Nature">
        <title>Comparative genomics reveals mobile pathogenicity chromosomes in Fusarium.</title>
        <authorList>
            <person name="Ma L.-J."/>
            <person name="van der Does H.C."/>
            <person name="Borkovich K.A."/>
            <person name="Coleman J.J."/>
            <person name="Daboussi M.-J."/>
            <person name="Di Pietro A."/>
            <person name="Dufresne M."/>
            <person name="Freitag M."/>
            <person name="Grabherr M."/>
            <person name="Henrissat B."/>
            <person name="Houterman P.M."/>
            <person name="Kang S."/>
            <person name="Shim W.-B."/>
            <person name="Woloshuk C."/>
            <person name="Xie X."/>
            <person name="Xu J.-R."/>
            <person name="Antoniw J."/>
            <person name="Baker S.E."/>
            <person name="Bluhm B.H."/>
            <person name="Breakspear A."/>
            <person name="Brown D.W."/>
            <person name="Butchko R.A.E."/>
            <person name="Chapman S."/>
            <person name="Coulson R."/>
            <person name="Coutinho P.M."/>
            <person name="Danchin E.G.J."/>
            <person name="Diener A."/>
            <person name="Gale L.R."/>
            <person name="Gardiner D.M."/>
            <person name="Goff S."/>
            <person name="Hammond-Kosack K.E."/>
            <person name="Hilburn K."/>
            <person name="Hua-Van A."/>
            <person name="Jonkers W."/>
            <person name="Kazan K."/>
            <person name="Kodira C.D."/>
            <person name="Koehrsen M."/>
            <person name="Kumar L."/>
            <person name="Lee Y.-H."/>
            <person name="Li L."/>
            <person name="Manners J.M."/>
            <person name="Miranda-Saavedra D."/>
            <person name="Mukherjee M."/>
            <person name="Park G."/>
            <person name="Park J."/>
            <person name="Park S.-Y."/>
            <person name="Proctor R.H."/>
            <person name="Regev A."/>
            <person name="Ruiz-Roldan M.C."/>
            <person name="Sain D."/>
            <person name="Sakthikumar S."/>
            <person name="Sykes S."/>
            <person name="Schwartz D.C."/>
            <person name="Turgeon B.G."/>
            <person name="Wapinski I."/>
            <person name="Yoder O."/>
            <person name="Young S."/>
            <person name="Zeng Q."/>
            <person name="Zhou S."/>
            <person name="Galagan J."/>
            <person name="Cuomo C.A."/>
            <person name="Kistler H.C."/>
            <person name="Rep M."/>
        </authorList>
    </citation>
    <scope>GENOME REANNOTATION</scope>
    <source>
        <strain>ATCC MYA-4620 / CBS 123657 / FGSC 9075 / NRRL 31084 / PH-1</strain>
    </source>
</reference>
<reference key="3">
    <citation type="journal article" date="2015" name="BMC Genomics">
        <title>The completed genome sequence of the pathogenic ascomycete fungus Fusarium graminearum.</title>
        <authorList>
            <person name="King R."/>
            <person name="Urban M."/>
            <person name="Hammond-Kosack M.C.U."/>
            <person name="Hassani-Pak K."/>
            <person name="Hammond-Kosack K.E."/>
        </authorList>
    </citation>
    <scope>NUCLEOTIDE SEQUENCE [LARGE SCALE GENOMIC DNA]</scope>
    <source>
        <strain>ATCC MYA-4620 / CBS 123657 / FGSC 9075 / NRRL 31084 / PH-1</strain>
    </source>
</reference>
<reference key="4">
    <citation type="journal article" date="2017" name="Sci. Rep.">
        <title>Genome-wide functional analysis reveals that autophagy is necessary for growth, sporulation, deoxynivalenol production and virulence in Fusarium graminearum.</title>
        <authorList>
            <person name="Lv W."/>
            <person name="Wang C."/>
            <person name="Yang N."/>
            <person name="Que Y."/>
            <person name="Talbot N.J."/>
            <person name="Wang Z."/>
        </authorList>
    </citation>
    <scope>IDENTIFICATION</scope>
    <scope>FUNCTION</scope>
    <scope>DISRUPTION PHENOTYPE</scope>
</reference>
<accession>I1RD82</accession>
<keyword id="KW-0072">Autophagy</keyword>
<keyword id="KW-0968">Cytoplasmic vesicle</keyword>
<keyword id="KW-1015">Disulfide bond</keyword>
<keyword id="KW-0325">Glycoprotein</keyword>
<keyword id="KW-0333">Golgi apparatus</keyword>
<keyword id="KW-0472">Membrane</keyword>
<keyword id="KW-0496">Mitochondrion</keyword>
<keyword id="KW-0653">Protein transport</keyword>
<keyword id="KW-1185">Reference proteome</keyword>
<keyword id="KW-0732">Signal</keyword>
<keyword id="KW-0812">Transmembrane</keyword>
<keyword id="KW-1133">Transmembrane helix</keyword>
<keyword id="KW-0813">Transport</keyword>
<sequence length="348" mass="38518">MYRPDLLAFLLPLLAAPVFSAETLDCGKIRADGHTFDLSKLGGPHSVVTTRYKPNPAGHYNTTYTLDVCKPLKKSGGSKSECPNGTRVCAITHLLKSDGDKKEEDEVTDIVAIAGNLENAGGSRFEWTPTRLSTAESDSDKKKEGLRLVLTGGKDPLSGPSKEKTDQKAIIEFLCDPNKEGTEGEWVSEEKYEKRADEKKDDDKKEDGGDKDEGESTLEHQLKHENASLIWDGFEVEKDVGILRLTWHTKYACEKRDESGGGGSDDGGDNSSSHWGFFTWFVLIAFLLIAGYLIFSSWINFTRYGARGWDLLPHSDTIRDIPYLLKDFIRRILNTVQGTGSRGGYSAV</sequence>
<gene>
    <name evidence="7" type="primary">ATG27</name>
    <name type="ORF">FG01574</name>
    <name type="ORF">FGRAMPH1_01T03835</name>
</gene>
<comment type="function">
    <text evidence="1 6">Effector of VPS34 phosphatidylinositol 3-phosphate kinase signaling (By similarity). Regulates the cytoplasm to vacuole transport (Cvt) vesicle formation (By similarity). Plays a role in ATG protein retrieval from the pre-autophagosomal structure (PAS) and is especially required for autophagy-dependent cycling of ATG9 (By similarity). Autophagy is required for proper vegetative growth, asexual/sexual reproduction, and full virulence (PubMed:28894236). Autophagy is particularly involved in the biosynthesis of deoxynivalenol (DON), an important virulence determinant (PubMed:28894236).</text>
</comment>
<comment type="subunit">
    <text evidence="1">Forms a complex with ATG9 and ATG23 (By similarity).</text>
</comment>
<comment type="subcellular location">
    <subcellularLocation>
        <location evidence="1">Cytoplasmic vesicle membrane</location>
        <topology evidence="2">Single-pass type I membrane protein</topology>
    </subcellularLocation>
    <subcellularLocation>
        <location evidence="1">Golgi apparatus membrane</location>
        <topology evidence="2">Single-pass type I membrane protein</topology>
    </subcellularLocation>
    <subcellularLocation>
        <location evidence="1">Mitochondrion membrane</location>
        <topology>Single-pass membrane protein</topology>
    </subcellularLocation>
    <subcellularLocation>
        <location>Preautophagosomal structure membrane</location>
        <topology evidence="2">Single-pass type I membrane protein</topology>
    </subcellularLocation>
    <text evidence="1">Cycles among the pre-autophagosomal structure (PAS), mitochondria and Golgi (By similarity).</text>
</comment>
<comment type="disruption phenotype">
    <text evidence="6">Does not significantly decrease the growth rate under nutrient-rich conditions (PubMed:28894236).</text>
</comment>
<comment type="similarity">
    <text evidence="8">Belongs to the ATG27 family.</text>
</comment>
<organism>
    <name type="scientific">Gibberella zeae (strain ATCC MYA-4620 / CBS 123657 / FGSC 9075 / NRRL 31084 / PH-1)</name>
    <name type="common">Wheat head blight fungus</name>
    <name type="synonym">Fusarium graminearum</name>
    <dbReference type="NCBI Taxonomy" id="229533"/>
    <lineage>
        <taxon>Eukaryota</taxon>
        <taxon>Fungi</taxon>
        <taxon>Dikarya</taxon>
        <taxon>Ascomycota</taxon>
        <taxon>Pezizomycotina</taxon>
        <taxon>Sordariomycetes</taxon>
        <taxon>Hypocreomycetidae</taxon>
        <taxon>Hypocreales</taxon>
        <taxon>Nectriaceae</taxon>
        <taxon>Fusarium</taxon>
    </lineage>
</organism>
<evidence type="ECO:0000250" key="1">
    <source>
        <dbReference type="UniProtKB" id="P46989"/>
    </source>
</evidence>
<evidence type="ECO:0000255" key="2"/>
<evidence type="ECO:0000255" key="3">
    <source>
        <dbReference type="PROSITE-ProRule" id="PRU00498"/>
    </source>
</evidence>
<evidence type="ECO:0000255" key="4">
    <source>
        <dbReference type="PROSITE-ProRule" id="PRU01262"/>
    </source>
</evidence>
<evidence type="ECO:0000256" key="5">
    <source>
        <dbReference type="SAM" id="MobiDB-lite"/>
    </source>
</evidence>
<evidence type="ECO:0000269" key="6">
    <source>
    </source>
</evidence>
<evidence type="ECO:0000303" key="7">
    <source>
    </source>
</evidence>
<evidence type="ECO:0000305" key="8"/>
<dbReference type="EMBL" id="HG970332">
    <property type="protein sequence ID" value="CEF73723.1"/>
    <property type="molecule type" value="Genomic_DNA"/>
</dbReference>
<dbReference type="RefSeq" id="XP_011317387.1">
    <property type="nucleotide sequence ID" value="XM_011319085.1"/>
</dbReference>
<dbReference type="STRING" id="229533.I1RD82"/>
<dbReference type="GlyCosmos" id="I1RD82">
    <property type="glycosylation" value="4 sites, No reported glycans"/>
</dbReference>
<dbReference type="KEGG" id="fgr:FGSG_01574"/>
<dbReference type="VEuPathDB" id="FungiDB:FGRAMPH1_01G03835"/>
<dbReference type="eggNOG" id="ENOG502S1VT">
    <property type="taxonomic scope" value="Eukaryota"/>
</dbReference>
<dbReference type="HOGENOM" id="CLU_047751_0_0_1"/>
<dbReference type="InParanoid" id="I1RD82"/>
<dbReference type="OrthoDB" id="128859at110618"/>
<dbReference type="Proteomes" id="UP000070720">
    <property type="component" value="Chromosome 1"/>
</dbReference>
<dbReference type="GO" id="GO:0030659">
    <property type="term" value="C:cytoplasmic vesicle membrane"/>
    <property type="evidence" value="ECO:0007669"/>
    <property type="project" value="UniProtKB-SubCell"/>
</dbReference>
<dbReference type="GO" id="GO:0000139">
    <property type="term" value="C:Golgi membrane"/>
    <property type="evidence" value="ECO:0007669"/>
    <property type="project" value="UniProtKB-SubCell"/>
</dbReference>
<dbReference type="GO" id="GO:0031966">
    <property type="term" value="C:mitochondrial membrane"/>
    <property type="evidence" value="ECO:0007669"/>
    <property type="project" value="UniProtKB-SubCell"/>
</dbReference>
<dbReference type="GO" id="GO:0034045">
    <property type="term" value="C:phagophore assembly site membrane"/>
    <property type="evidence" value="ECO:0007669"/>
    <property type="project" value="UniProtKB-SubCell"/>
</dbReference>
<dbReference type="GO" id="GO:0006914">
    <property type="term" value="P:autophagy"/>
    <property type="evidence" value="ECO:0007669"/>
    <property type="project" value="UniProtKB-KW"/>
</dbReference>
<dbReference type="GO" id="GO:0015031">
    <property type="term" value="P:protein transport"/>
    <property type="evidence" value="ECO:0007669"/>
    <property type="project" value="UniProtKB-KW"/>
</dbReference>
<dbReference type="Gene3D" id="2.70.130.10">
    <property type="entry name" value="Mannose-6-phosphate receptor binding domain"/>
    <property type="match status" value="1"/>
</dbReference>
<dbReference type="InterPro" id="IPR018939">
    <property type="entry name" value="Autophagy-rel_prot_27"/>
</dbReference>
<dbReference type="InterPro" id="IPR009011">
    <property type="entry name" value="Man6P_isomerase_rcpt-bd_dom_sf"/>
</dbReference>
<dbReference type="InterPro" id="IPR044865">
    <property type="entry name" value="MRH_dom"/>
</dbReference>
<dbReference type="PANTHER" id="PTHR15071:SF13">
    <property type="entry name" value="AUTOPHAGY-RELATED PROTEIN 27"/>
    <property type="match status" value="1"/>
</dbReference>
<dbReference type="PANTHER" id="PTHR15071">
    <property type="entry name" value="MANNOSE-6-PHOSPHATE RECEPTOR FAMILY MEMBER"/>
    <property type="match status" value="1"/>
</dbReference>
<dbReference type="Pfam" id="PF09451">
    <property type="entry name" value="ATG27"/>
    <property type="match status" value="1"/>
</dbReference>
<dbReference type="SUPFAM" id="SSF50911">
    <property type="entry name" value="Mannose 6-phosphate receptor domain"/>
    <property type="match status" value="1"/>
</dbReference>
<dbReference type="PROSITE" id="PS51914">
    <property type="entry name" value="MRH"/>
    <property type="match status" value="1"/>
</dbReference>
<name>ATG27_GIBZE</name>
<proteinExistence type="inferred from homology"/>